<proteinExistence type="evidence at protein level"/>
<reference key="1">
    <citation type="journal article" date="2002" name="Nature">
        <title>The genome sequence of Schizosaccharomyces pombe.</title>
        <authorList>
            <person name="Wood V."/>
            <person name="Gwilliam R."/>
            <person name="Rajandream M.A."/>
            <person name="Lyne M.H."/>
            <person name="Lyne R."/>
            <person name="Stewart A."/>
            <person name="Sgouros J.G."/>
            <person name="Peat N."/>
            <person name="Hayles J."/>
            <person name="Baker S.G."/>
            <person name="Basham D."/>
            <person name="Bowman S."/>
            <person name="Brooks K."/>
            <person name="Brown D."/>
            <person name="Brown S."/>
            <person name="Chillingworth T."/>
            <person name="Churcher C.M."/>
            <person name="Collins M."/>
            <person name="Connor R."/>
            <person name="Cronin A."/>
            <person name="Davis P."/>
            <person name="Feltwell T."/>
            <person name="Fraser A."/>
            <person name="Gentles S."/>
            <person name="Goble A."/>
            <person name="Hamlin N."/>
            <person name="Harris D.E."/>
            <person name="Hidalgo J."/>
            <person name="Hodgson G."/>
            <person name="Holroyd S."/>
            <person name="Hornsby T."/>
            <person name="Howarth S."/>
            <person name="Huckle E.J."/>
            <person name="Hunt S."/>
            <person name="Jagels K."/>
            <person name="James K.D."/>
            <person name="Jones L."/>
            <person name="Jones M."/>
            <person name="Leather S."/>
            <person name="McDonald S."/>
            <person name="McLean J."/>
            <person name="Mooney P."/>
            <person name="Moule S."/>
            <person name="Mungall K.L."/>
            <person name="Murphy L.D."/>
            <person name="Niblett D."/>
            <person name="Odell C."/>
            <person name="Oliver K."/>
            <person name="O'Neil S."/>
            <person name="Pearson D."/>
            <person name="Quail M.A."/>
            <person name="Rabbinowitsch E."/>
            <person name="Rutherford K.M."/>
            <person name="Rutter S."/>
            <person name="Saunders D."/>
            <person name="Seeger K."/>
            <person name="Sharp S."/>
            <person name="Skelton J."/>
            <person name="Simmonds M.N."/>
            <person name="Squares R."/>
            <person name="Squares S."/>
            <person name="Stevens K."/>
            <person name="Taylor K."/>
            <person name="Taylor R.G."/>
            <person name="Tivey A."/>
            <person name="Walsh S.V."/>
            <person name="Warren T."/>
            <person name="Whitehead S."/>
            <person name="Woodward J.R."/>
            <person name="Volckaert G."/>
            <person name="Aert R."/>
            <person name="Robben J."/>
            <person name="Grymonprez B."/>
            <person name="Weltjens I."/>
            <person name="Vanstreels E."/>
            <person name="Rieger M."/>
            <person name="Schaefer M."/>
            <person name="Mueller-Auer S."/>
            <person name="Gabel C."/>
            <person name="Fuchs M."/>
            <person name="Duesterhoeft A."/>
            <person name="Fritzc C."/>
            <person name="Holzer E."/>
            <person name="Moestl D."/>
            <person name="Hilbert H."/>
            <person name="Borzym K."/>
            <person name="Langer I."/>
            <person name="Beck A."/>
            <person name="Lehrach H."/>
            <person name="Reinhardt R."/>
            <person name="Pohl T.M."/>
            <person name="Eger P."/>
            <person name="Zimmermann W."/>
            <person name="Wedler H."/>
            <person name="Wambutt R."/>
            <person name="Purnelle B."/>
            <person name="Goffeau A."/>
            <person name="Cadieu E."/>
            <person name="Dreano S."/>
            <person name="Gloux S."/>
            <person name="Lelaure V."/>
            <person name="Mottier S."/>
            <person name="Galibert F."/>
            <person name="Aves S.J."/>
            <person name="Xiang Z."/>
            <person name="Hunt C."/>
            <person name="Moore K."/>
            <person name="Hurst S.M."/>
            <person name="Lucas M."/>
            <person name="Rochet M."/>
            <person name="Gaillardin C."/>
            <person name="Tallada V.A."/>
            <person name="Garzon A."/>
            <person name="Thode G."/>
            <person name="Daga R.R."/>
            <person name="Cruzado L."/>
            <person name="Jimenez J."/>
            <person name="Sanchez M."/>
            <person name="del Rey F."/>
            <person name="Benito J."/>
            <person name="Dominguez A."/>
            <person name="Revuelta J.L."/>
            <person name="Moreno S."/>
            <person name="Armstrong J."/>
            <person name="Forsburg S.L."/>
            <person name="Cerutti L."/>
            <person name="Lowe T."/>
            <person name="McCombie W.R."/>
            <person name="Paulsen I."/>
            <person name="Potashkin J."/>
            <person name="Shpakovski G.V."/>
            <person name="Ussery D."/>
            <person name="Barrell B.G."/>
            <person name="Nurse P."/>
        </authorList>
    </citation>
    <scope>NUCLEOTIDE SEQUENCE [LARGE SCALE GENOMIC DNA]</scope>
    <source>
        <strain>972 / ATCC 24843</strain>
    </source>
</reference>
<reference key="2">
    <citation type="journal article" date="2005" name="Curr. Biol.">
        <title>A large-scale screen in S. pombe identifies seven novel genes required for critical meiotic events.</title>
        <authorList>
            <person name="Martin-Castellanos C."/>
            <person name="Blanco M."/>
            <person name="Rozalen A.E."/>
            <person name="Perez-Hidalgo L."/>
            <person name="Garcia A.I."/>
            <person name="Conde F."/>
            <person name="Mata J."/>
            <person name="Ellermeier C."/>
            <person name="Davis L."/>
            <person name="San-Segundo P."/>
            <person name="Smith G.R."/>
            <person name="Moreno S."/>
        </authorList>
    </citation>
    <scope>FUNCTION IN MEIOSIS</scope>
</reference>
<reference key="3">
    <citation type="journal article" date="2006" name="Nat. Biotechnol.">
        <title>ORFeome cloning and global analysis of protein localization in the fission yeast Schizosaccharomyces pombe.</title>
        <authorList>
            <person name="Matsuyama A."/>
            <person name="Arai R."/>
            <person name="Yashiroda Y."/>
            <person name="Shirai A."/>
            <person name="Kamata A."/>
            <person name="Sekido S."/>
            <person name="Kobayashi Y."/>
            <person name="Hashimoto A."/>
            <person name="Hamamoto M."/>
            <person name="Hiraoka Y."/>
            <person name="Horinouchi S."/>
            <person name="Yoshida M."/>
        </authorList>
    </citation>
    <scope>SUBCELLULAR LOCATION [LARGE SCALE ANALYSIS]</scope>
</reference>
<keyword id="KW-0469">Meiosis</keyword>
<keyword id="KW-0496">Mitochondrion</keyword>
<keyword id="KW-1185">Reference proteome</keyword>
<keyword id="KW-0809">Transit peptide</keyword>
<sequence>MSIPVMQLKHELALKAREEYLRKELPLKVRANTSRMNPGAKTWIPQINHRKSRNHYNRKETCQFPPLYNVEAKINHSYSAFYRPFTKRENGLWYANPYYMQHGPNGNYHHVYY</sequence>
<feature type="transit peptide" description="Mitochondrion" evidence="1">
    <location>
        <begin position="1"/>
        <end status="unknown"/>
    </location>
</feature>
<feature type="chain" id="PRO_0000116870" description="Meiotically up-regulated gene 98 protein, mitochondrial">
    <location>
        <begin status="unknown"/>
        <end position="113"/>
    </location>
</feature>
<gene>
    <name type="primary">mug98</name>
    <name type="ORF">SPBC15D4.12c</name>
</gene>
<dbReference type="EMBL" id="CU329671">
    <property type="protein sequence ID" value="CAA20487.1"/>
    <property type="molecule type" value="Genomic_DNA"/>
</dbReference>
<dbReference type="PIR" id="T39488">
    <property type="entry name" value="T39488"/>
</dbReference>
<dbReference type="RefSeq" id="NP_596252.1">
    <property type="nucleotide sequence ID" value="NM_001022171.1"/>
</dbReference>
<dbReference type="BioGRID" id="276176">
    <property type="interactions" value="2"/>
</dbReference>
<dbReference type="PaxDb" id="4896-SPBC15D4.12c.1"/>
<dbReference type="EnsemblFungi" id="SPBC15D4.12c.1">
    <property type="protein sequence ID" value="SPBC15D4.12c.1:pep"/>
    <property type="gene ID" value="SPBC15D4.12c"/>
</dbReference>
<dbReference type="GeneID" id="2539618"/>
<dbReference type="KEGG" id="spo:2539618"/>
<dbReference type="PomBase" id="SPBC15D4.12c">
    <property type="gene designation" value="mug98"/>
</dbReference>
<dbReference type="VEuPathDB" id="FungiDB:SPBC15D4.12c"/>
<dbReference type="HOGENOM" id="CLU_2134997_0_0_1"/>
<dbReference type="InParanoid" id="O74317"/>
<dbReference type="PRO" id="PR:O74317"/>
<dbReference type="Proteomes" id="UP000002485">
    <property type="component" value="Chromosome II"/>
</dbReference>
<dbReference type="GO" id="GO:0005739">
    <property type="term" value="C:mitochondrion"/>
    <property type="evidence" value="ECO:0007005"/>
    <property type="project" value="PomBase"/>
</dbReference>
<dbReference type="GO" id="GO:0051321">
    <property type="term" value="P:meiotic cell cycle"/>
    <property type="evidence" value="ECO:0007669"/>
    <property type="project" value="UniProtKB-KW"/>
</dbReference>
<evidence type="ECO:0000255" key="1"/>
<evidence type="ECO:0000269" key="2">
    <source>
    </source>
</evidence>
<evidence type="ECO:0000269" key="3">
    <source>
    </source>
</evidence>
<accession>O74317</accession>
<comment type="function">
    <text evidence="2">Has a role in meiosis.</text>
</comment>
<comment type="subcellular location">
    <subcellularLocation>
        <location evidence="3">Mitochondrion</location>
    </subcellularLocation>
</comment>
<protein>
    <recommendedName>
        <fullName>Meiotically up-regulated gene 98 protein, mitochondrial</fullName>
    </recommendedName>
</protein>
<organism>
    <name type="scientific">Schizosaccharomyces pombe (strain 972 / ATCC 24843)</name>
    <name type="common">Fission yeast</name>
    <dbReference type="NCBI Taxonomy" id="284812"/>
    <lineage>
        <taxon>Eukaryota</taxon>
        <taxon>Fungi</taxon>
        <taxon>Dikarya</taxon>
        <taxon>Ascomycota</taxon>
        <taxon>Taphrinomycotina</taxon>
        <taxon>Schizosaccharomycetes</taxon>
        <taxon>Schizosaccharomycetales</taxon>
        <taxon>Schizosaccharomycetaceae</taxon>
        <taxon>Schizosaccharomyces</taxon>
    </lineage>
</organism>
<name>MUG98_SCHPO</name>